<proteinExistence type="evidence at protein level"/>
<accession>D4GWR6</accession>
<feature type="chain" id="PRO_0000429255" description="Hydroxymethylglutaryl-CoA synthase">
    <location>
        <begin position="1"/>
        <end position="445"/>
    </location>
</feature>
<feature type="active site" description="Proton donor/acceptor" evidence="1">
    <location>
        <position position="83"/>
    </location>
</feature>
<feature type="active site" description="Acyl-thioester intermediate" evidence="1">
    <location>
        <position position="120"/>
    </location>
</feature>
<feature type="active site" description="Proton donor/acceptor" evidence="1">
    <location>
        <position position="244"/>
    </location>
</feature>
<feature type="binding site" evidence="2">
    <location>
        <position position="31"/>
    </location>
    <ligand>
        <name>(3S)-3-hydroxy-3-methylglutaryl-CoA</name>
        <dbReference type="ChEBI" id="CHEBI:43074"/>
    </ligand>
</feature>
<feature type="binding site" evidence="2">
    <location>
        <position position="120"/>
    </location>
    <ligand>
        <name>(3S)-3-hydroxy-3-methylglutaryl-CoA</name>
        <dbReference type="ChEBI" id="CHEBI:43074"/>
    </ligand>
</feature>
<feature type="binding site" evidence="2">
    <location>
        <position position="163"/>
    </location>
    <ligand>
        <name>(3S)-3-hydroxy-3-methylglutaryl-CoA</name>
        <dbReference type="ChEBI" id="CHEBI:43074"/>
    </ligand>
</feature>
<feature type="binding site" evidence="2">
    <location>
        <position position="211"/>
    </location>
    <ligand>
        <name>(3S)-3-hydroxy-3-methylglutaryl-CoA</name>
        <dbReference type="ChEBI" id="CHEBI:43074"/>
    </ligand>
</feature>
<feature type="binding site" evidence="2">
    <location>
        <position position="244"/>
    </location>
    <ligand>
        <name>(3S)-3-hydroxy-3-methylglutaryl-CoA</name>
        <dbReference type="ChEBI" id="CHEBI:43074"/>
    </ligand>
</feature>
<feature type="binding site" evidence="2">
    <location>
        <position position="253"/>
    </location>
    <ligand>
        <name>(3S)-3-hydroxy-3-methylglutaryl-CoA</name>
        <dbReference type="ChEBI" id="CHEBI:43074"/>
    </ligand>
</feature>
<feature type="binding site" evidence="2">
    <location>
        <position position="328"/>
    </location>
    <ligand>
        <name>(3S)-3-hydroxy-3-methylglutaryl-CoA</name>
        <dbReference type="ChEBI" id="CHEBI:43074"/>
    </ligand>
</feature>
<feature type="binding site" evidence="2">
    <location>
        <position position="364"/>
    </location>
    <ligand>
        <name>(3S)-3-hydroxy-3-methylglutaryl-CoA</name>
        <dbReference type="ChEBI" id="CHEBI:43074"/>
    </ligand>
</feature>
<reference key="1">
    <citation type="journal article" date="2010" name="PLoS ONE">
        <title>The complete genome sequence of Haloferax volcanii DS2, a model archaeon.</title>
        <authorList>
            <person name="Hartman A.L."/>
            <person name="Norais C."/>
            <person name="Badger J.H."/>
            <person name="Delmas S."/>
            <person name="Haldenby S."/>
            <person name="Madupu R."/>
            <person name="Robinson J."/>
            <person name="Khouri H."/>
            <person name="Ren Q."/>
            <person name="Lowe T.M."/>
            <person name="Maupin-Furlow J."/>
            <person name="Pohlschroder M."/>
            <person name="Daniels C."/>
            <person name="Pfeiffer F."/>
            <person name="Allers T."/>
            <person name="Eisen J.A."/>
        </authorList>
    </citation>
    <scope>NUCLEOTIDE SEQUENCE [LARGE SCALE GENOMIC DNA]</scope>
    <source>
        <strain>ATCC 29605 / DSM 3757 / JCM 8879 / NBRC 14742 / NCIMB 2012 / VKM B-1768 / DS2</strain>
    </source>
</reference>
<reference key="2">
    <citation type="journal article" date="2014" name="PLoS Genet.">
        <title>Phylogenetically driven sequencing of extremely halophilic archaea reveals strategies for static and dynamic osmo-response.</title>
        <authorList>
            <person name="Becker E.A."/>
            <person name="Seitzer P.M."/>
            <person name="Tritt A."/>
            <person name="Larsen D."/>
            <person name="Krusor M."/>
            <person name="Yao A.I."/>
            <person name="Wu D."/>
            <person name="Madern D."/>
            <person name="Eisen J.A."/>
            <person name="Darling A.E."/>
            <person name="Facciotti M.T."/>
        </authorList>
    </citation>
    <scope>NUCLEOTIDE SEQUENCE [LARGE SCALE GENOMIC DNA]</scope>
    <source>
        <strain>ATCC 29605 / DSM 3757 / JCM 8879 / NBRC 14742 / NCIMB 2012 / VKM B-1768 / DS2</strain>
    </source>
</reference>
<reference key="3">
    <citation type="journal article" date="2013" name="J. Bacteriol.">
        <title>Expression in Haloferax volcanii of 3-hydroxy-3-methylglutaryl coenzyme A synthase facilitates isolation and characterization of the active form of a key enzyme required for polyisoprenoid cell membrane biosynthesis in halophilic archaea.</title>
        <authorList>
            <person name="VanNice J.C."/>
            <person name="Skaff D.A."/>
            <person name="Wyckoff G.J."/>
            <person name="Miziorko H.M."/>
        </authorList>
    </citation>
    <scope>FUNCTION</scope>
    <scope>CATALYTIC ACTIVITY</scope>
    <scope>BIOPHYSICOCHEMICAL PROPERTIES</scope>
    <scope>ACTIVITY REGULATION</scope>
    <scope>PATHWAY</scope>
    <source>
        <strain>DS2 / DS70</strain>
    </source>
</reference>
<organism>
    <name type="scientific">Haloferax volcanii (strain ATCC 29605 / DSM 3757 / JCM 8879 / NBRC 14742 / NCIMB 2012 / VKM B-1768 / DS2)</name>
    <name type="common">Halobacterium volcanii</name>
    <dbReference type="NCBI Taxonomy" id="309800"/>
    <lineage>
        <taxon>Archaea</taxon>
        <taxon>Methanobacteriati</taxon>
        <taxon>Methanobacteriota</taxon>
        <taxon>Stenosarchaea group</taxon>
        <taxon>Halobacteria</taxon>
        <taxon>Halobacteriales</taxon>
        <taxon>Haloferacaceae</taxon>
        <taxon>Haloferax</taxon>
    </lineage>
</organism>
<evidence type="ECO:0000250" key="1"/>
<evidence type="ECO:0000250" key="2">
    <source>
        <dbReference type="UniProtKB" id="P54868"/>
    </source>
</evidence>
<evidence type="ECO:0000269" key="3">
    <source>
    </source>
</evidence>
<evidence type="ECO:0000305" key="4"/>
<comment type="function">
    <text evidence="3">Catalyzes the condensation of acetyl-CoA with acetoacetyl-CoA to form 3-hydroxy-3-methylglutaryl-CoA (HMG-CoA). Functions in the mevalonate (MVA) pathway leading to isopentenyl diphosphate (IPP), a key precursor for the biosynthesis of isoprenoid compounds such as archaeal membrane lipids.</text>
</comment>
<comment type="catalytic activity">
    <reaction evidence="3">
        <text>acetoacetyl-CoA + acetyl-CoA + H2O = (3S)-3-hydroxy-3-methylglutaryl-CoA + CoA + H(+)</text>
        <dbReference type="Rhea" id="RHEA:10188"/>
        <dbReference type="ChEBI" id="CHEBI:15377"/>
        <dbReference type="ChEBI" id="CHEBI:15378"/>
        <dbReference type="ChEBI" id="CHEBI:43074"/>
        <dbReference type="ChEBI" id="CHEBI:57286"/>
        <dbReference type="ChEBI" id="CHEBI:57287"/>
        <dbReference type="ChEBI" id="CHEBI:57288"/>
        <dbReference type="EC" id="2.3.3.10"/>
    </reaction>
</comment>
<comment type="activity regulation">
    <text evidence="3">In contrast to bacterial and eukaryotic HMG-CoA synthases, is insensitive to feedback substrate inhibition by acetoacetyl-CoA. Enzymatic activity is inhibited by hymeglusin, which also blocks the propagation of H.volcanii cells in vivo, indicating the critical role that the mevalonate pathway plays in isoprenoid biosynthesis by these archaea.</text>
</comment>
<comment type="biophysicochemical properties">
    <kinetics>
        <KM evidence="3">50 uM for acetyl-CoA (at pH 8 and 30 degrees Celsius)</KM>
        <KM evidence="3">1.4 uM for acetoacetyl-CoA (at pH 8 and 30 degrees Celsius)</KM>
        <Vmax evidence="3">5.3 umol/min/mg enzyme (at pH 8 and 30 degrees Celsius)</Vmax>
        <text>kcat is 4.6 sec(-1) (at pH 8 and 30 degrees Celsius).</text>
    </kinetics>
    <phDependence>
        <text evidence="3">Optimum pH is about 8.5.</text>
    </phDependence>
    <temperatureDependence>
        <text evidence="3">Optimum temperature is 45 degrees Celsius.</text>
    </temperatureDependence>
</comment>
<comment type="pathway">
    <text evidence="3">Metabolic intermediate biosynthesis; (R)-mevalonate biosynthesis; (R)-mevalonate from acetyl-CoA: step 2/3.</text>
</comment>
<comment type="similarity">
    <text evidence="4">Belongs to the thiolase-like superfamily. HMG-CoA synthase family.</text>
</comment>
<sequence>MTSVGIDAMEIWTGKLVLDLPNTFAPVKGEDPEKYTKGLGLHTSSFPDVYEDIVTMGANAAKKLMDRKGLTPADIGRIDVATESAFDNSKPVSTYIAGCLEQVYDGDFRHANKGERKFACIAGTQSLDDAYNWIKAGRNRGRAALVIATDTALYERGDPGEATQGAGAVAMLIDEDPDLVELSTEQGYGSMDETDFLKPNQQFPSVDGKRSMQVYLARMREALEDYESVAGRTHPDLFEYIPFHTPFPGMVRKAALLGFRHMTRDTDIEDDLESEIGRQPREEDFETWDDYEEAIRGYMDELKTTEQYRDWYGRVIEPTLDISSRVGNWYTGSVHIARLSALKAAADEGKDMTGKQLLVGSYGSGAQAEIHAERVQETWLDEIEAVDVDDQLAARTEISFDDYELIHDVHNHEKEIEVEEFTQPEAEFVFTGWGRMNERRYEYVE</sequence>
<gene>
    <name type="primary">hmgB</name>
    <name type="ordered locus">HVO_2419</name>
    <name type="ORF">C498_07375</name>
</gene>
<dbReference type="EC" id="2.3.3.10"/>
<dbReference type="EMBL" id="CP001956">
    <property type="protein sequence ID" value="ADE04128.1"/>
    <property type="molecule type" value="Genomic_DNA"/>
</dbReference>
<dbReference type="EMBL" id="AOHU01000044">
    <property type="protein sequence ID" value="ELY32861.1"/>
    <property type="molecule type" value="Genomic_DNA"/>
</dbReference>
<dbReference type="RefSeq" id="WP_004042308.1">
    <property type="nucleotide sequence ID" value="NC_013967.1"/>
</dbReference>
<dbReference type="SMR" id="D4GWR6"/>
<dbReference type="STRING" id="309800.HVO_2419"/>
<dbReference type="PaxDb" id="309800-C498_07375"/>
<dbReference type="EnsemblBacteria" id="ADE04128">
    <property type="protein sequence ID" value="ADE04128"/>
    <property type="gene ID" value="HVO_2419"/>
</dbReference>
<dbReference type="GeneID" id="8924297"/>
<dbReference type="KEGG" id="hvo:HVO_2419"/>
<dbReference type="PATRIC" id="fig|309800.29.peg.1430"/>
<dbReference type="eggNOG" id="arCOG01767">
    <property type="taxonomic scope" value="Archaea"/>
</dbReference>
<dbReference type="HOGENOM" id="CLU_008065_3_2_2"/>
<dbReference type="OrthoDB" id="5812at2157"/>
<dbReference type="BioCyc" id="MetaCyc:MONOMER-21128"/>
<dbReference type="BRENDA" id="2.3.3.10">
    <property type="organism ID" value="2561"/>
</dbReference>
<dbReference type="UniPathway" id="UPA00058">
    <property type="reaction ID" value="UER00102"/>
</dbReference>
<dbReference type="Proteomes" id="UP000008243">
    <property type="component" value="Chromosome"/>
</dbReference>
<dbReference type="Proteomes" id="UP000011532">
    <property type="component" value="Unassembled WGS sequence"/>
</dbReference>
<dbReference type="GO" id="GO:0004421">
    <property type="term" value="F:hydroxymethylglutaryl-CoA synthase activity"/>
    <property type="evidence" value="ECO:0007669"/>
    <property type="project" value="UniProtKB-EC"/>
</dbReference>
<dbReference type="GO" id="GO:0006084">
    <property type="term" value="P:acetyl-CoA metabolic process"/>
    <property type="evidence" value="ECO:0007669"/>
    <property type="project" value="InterPro"/>
</dbReference>
<dbReference type="GO" id="GO:0010142">
    <property type="term" value="P:farnesyl diphosphate biosynthetic process, mevalonate pathway"/>
    <property type="evidence" value="ECO:0007669"/>
    <property type="project" value="InterPro"/>
</dbReference>
<dbReference type="CDD" id="cd00827">
    <property type="entry name" value="init_cond_enzymes"/>
    <property type="match status" value="1"/>
</dbReference>
<dbReference type="Gene3D" id="3.40.47.10">
    <property type="match status" value="1"/>
</dbReference>
<dbReference type="InterPro" id="IPR053544">
    <property type="entry name" value="HMG-CoA_Synthase-like"/>
</dbReference>
<dbReference type="InterPro" id="IPR013746">
    <property type="entry name" value="HMG_CoA_synt_C_dom"/>
</dbReference>
<dbReference type="InterPro" id="IPR013528">
    <property type="entry name" value="HMG_CoA_synth_N"/>
</dbReference>
<dbReference type="InterPro" id="IPR016039">
    <property type="entry name" value="Thiolase-like"/>
</dbReference>
<dbReference type="NCBIfam" id="NF041302">
    <property type="entry name" value="HMG_CoAsyn_Halo"/>
    <property type="match status" value="1"/>
</dbReference>
<dbReference type="PANTHER" id="PTHR43323">
    <property type="entry name" value="3-HYDROXY-3-METHYLGLUTARYL COENZYME A SYNTHASE"/>
    <property type="match status" value="1"/>
</dbReference>
<dbReference type="PANTHER" id="PTHR43323:SF2">
    <property type="entry name" value="HYDROXYMETHYLGLUTARYL-COA SYNTHASE"/>
    <property type="match status" value="1"/>
</dbReference>
<dbReference type="Pfam" id="PF08540">
    <property type="entry name" value="HMG_CoA_synt_C"/>
    <property type="match status" value="1"/>
</dbReference>
<dbReference type="Pfam" id="PF01154">
    <property type="entry name" value="HMG_CoA_synt_N"/>
    <property type="match status" value="1"/>
</dbReference>
<dbReference type="SUPFAM" id="SSF53901">
    <property type="entry name" value="Thiolase-like"/>
    <property type="match status" value="2"/>
</dbReference>
<protein>
    <recommendedName>
        <fullName>Hydroxymethylglutaryl-CoA synthase</fullName>
        <shortName>HMG-CoA synthase</shortName>
        <shortName>HMGCS</shortName>
        <ecNumber>2.3.3.10</ecNumber>
    </recommendedName>
    <alternativeName>
        <fullName>3-hydroxy-3-methylglutaryl coenzyme A synthase</fullName>
    </alternativeName>
</protein>
<name>HMGCS_HALVD</name>
<keyword id="KW-0012">Acyltransferase</keyword>
<keyword id="KW-0414">Isoprene biosynthesis</keyword>
<keyword id="KW-0444">Lipid biosynthesis</keyword>
<keyword id="KW-0443">Lipid metabolism</keyword>
<keyword id="KW-1185">Reference proteome</keyword>
<keyword id="KW-0808">Transferase</keyword>